<protein>
    <recommendedName>
        <fullName evidence="1 5">DNA-directed RNA polymerase subunit Rpo5</fullName>
        <ecNumber evidence="1">2.7.7.6</ecNumber>
    </recommendedName>
    <alternativeName>
        <fullName evidence="1">DNA-directed RNA polymerase subunit H</fullName>
    </alternativeName>
</protein>
<keyword id="KW-0002">3D-structure</keyword>
<keyword id="KW-0963">Cytoplasm</keyword>
<keyword id="KW-0240">DNA-directed RNA polymerase</keyword>
<keyword id="KW-0548">Nucleotidyltransferase</keyword>
<keyword id="KW-0804">Transcription</keyword>
<keyword id="KW-0808">Transferase</keyword>
<name>RPO5_SACSH</name>
<accession>B8YB60</accession>
<accession>A0A8F5BL58</accession>
<sequence>MRGSSNRKIDPRIHYLVPKHEVLSIDEAYKILKELGIRPEQLPWIRASDPVARSINAKPGDIIRIIRKSQLYGEVVSYRYVISG</sequence>
<proteinExistence type="evidence at protein level"/>
<dbReference type="EC" id="2.7.7.6" evidence="1"/>
<dbReference type="EMBL" id="FJ515672">
    <property type="protein sequence ID" value="ACL36495.1"/>
    <property type="molecule type" value="Genomic_DNA"/>
</dbReference>
<dbReference type="EMBL" id="CP077717">
    <property type="protein sequence ID" value="QXJ27175.1"/>
    <property type="molecule type" value="Genomic_DNA"/>
</dbReference>
<dbReference type="RefSeq" id="WP_012711883.1">
    <property type="nucleotide sequence ID" value="NZ_CP077717.1"/>
</dbReference>
<dbReference type="PDB" id="2WAQ">
    <property type="method" value="X-ray"/>
    <property type="resolution" value="3.35 A"/>
    <property type="chains" value="H=1-84"/>
</dbReference>
<dbReference type="PDB" id="2WB1">
    <property type="method" value="X-ray"/>
    <property type="resolution" value="3.52 A"/>
    <property type="chains" value="H/Z=1-84"/>
</dbReference>
<dbReference type="PDB" id="2Y0S">
    <property type="method" value="X-ray"/>
    <property type="resolution" value="3.80 A"/>
    <property type="chains" value="H/Z=1-84"/>
</dbReference>
<dbReference type="PDB" id="4AYB">
    <property type="method" value="X-ray"/>
    <property type="resolution" value="3.20 A"/>
    <property type="chains" value="H=1-84"/>
</dbReference>
<dbReference type="PDB" id="4V8S">
    <property type="method" value="X-ray"/>
    <property type="resolution" value="4.32 A"/>
    <property type="chains" value="AZ/BH=1-84"/>
</dbReference>
<dbReference type="PDBsum" id="2WAQ"/>
<dbReference type="PDBsum" id="2WB1"/>
<dbReference type="PDBsum" id="2Y0S"/>
<dbReference type="PDBsum" id="4AYB"/>
<dbReference type="PDBsum" id="4V8S"/>
<dbReference type="SMR" id="B8YB60"/>
<dbReference type="KEGG" id="sshi:J5U23_00029"/>
<dbReference type="OrthoDB" id="30537at2157"/>
<dbReference type="BRENDA" id="2.7.7.6">
    <property type="organism ID" value="6162"/>
</dbReference>
<dbReference type="EvolutionaryTrace" id="B8YB60"/>
<dbReference type="Proteomes" id="UP000694018">
    <property type="component" value="Chromosome"/>
</dbReference>
<dbReference type="GO" id="GO:0005737">
    <property type="term" value="C:cytoplasm"/>
    <property type="evidence" value="ECO:0007669"/>
    <property type="project" value="UniProtKB-SubCell"/>
</dbReference>
<dbReference type="GO" id="GO:0000428">
    <property type="term" value="C:DNA-directed RNA polymerase complex"/>
    <property type="evidence" value="ECO:0000314"/>
    <property type="project" value="UniProtKB"/>
</dbReference>
<dbReference type="GO" id="GO:0003677">
    <property type="term" value="F:DNA binding"/>
    <property type="evidence" value="ECO:0007669"/>
    <property type="project" value="InterPro"/>
</dbReference>
<dbReference type="GO" id="GO:0003899">
    <property type="term" value="F:DNA-directed RNA polymerase activity"/>
    <property type="evidence" value="ECO:0007669"/>
    <property type="project" value="UniProtKB-UniRule"/>
</dbReference>
<dbReference type="GO" id="GO:0006366">
    <property type="term" value="P:transcription by RNA polymerase II"/>
    <property type="evidence" value="ECO:0007669"/>
    <property type="project" value="TreeGrafter"/>
</dbReference>
<dbReference type="GO" id="GO:0006362">
    <property type="term" value="P:transcription elongation by RNA polymerase I"/>
    <property type="evidence" value="ECO:0007669"/>
    <property type="project" value="TreeGrafter"/>
</dbReference>
<dbReference type="GO" id="GO:0042797">
    <property type="term" value="P:tRNA transcription by RNA polymerase III"/>
    <property type="evidence" value="ECO:0007669"/>
    <property type="project" value="TreeGrafter"/>
</dbReference>
<dbReference type="Gene3D" id="3.90.940.20">
    <property type="entry name" value="RPB5-like RNA polymerase subunit"/>
    <property type="match status" value="1"/>
</dbReference>
<dbReference type="HAMAP" id="MF_00025">
    <property type="entry name" value="RNApol_Rpo5_RPB5"/>
    <property type="match status" value="1"/>
</dbReference>
<dbReference type="InterPro" id="IPR014381">
    <property type="entry name" value="Arch_Rpo5/euc_Rpb5"/>
</dbReference>
<dbReference type="InterPro" id="IPR000783">
    <property type="entry name" value="RNA_pol_subH/Rpb5_C"/>
</dbReference>
<dbReference type="InterPro" id="IPR020608">
    <property type="entry name" value="RNA_pol_subH/Rpb5_CS"/>
</dbReference>
<dbReference type="InterPro" id="IPR035913">
    <property type="entry name" value="RPB5-like_sf"/>
</dbReference>
<dbReference type="NCBIfam" id="NF007129">
    <property type="entry name" value="PRK09570.1"/>
    <property type="match status" value="1"/>
</dbReference>
<dbReference type="PANTHER" id="PTHR10535">
    <property type="entry name" value="DNA-DIRECTED RNA POLYMERASES I, II, AND III SUBUNIT RPABC1"/>
    <property type="match status" value="1"/>
</dbReference>
<dbReference type="PANTHER" id="PTHR10535:SF0">
    <property type="entry name" value="DNA-DIRECTED RNA POLYMERASES I, II, AND III SUBUNIT RPABC1"/>
    <property type="match status" value="1"/>
</dbReference>
<dbReference type="Pfam" id="PF01191">
    <property type="entry name" value="RNA_pol_Rpb5_C"/>
    <property type="match status" value="1"/>
</dbReference>
<dbReference type="SUPFAM" id="SSF55287">
    <property type="entry name" value="RPB5-like RNA polymerase subunit"/>
    <property type="match status" value="1"/>
</dbReference>
<dbReference type="PROSITE" id="PS01110">
    <property type="entry name" value="RNA_POL_H_23KD"/>
    <property type="match status" value="1"/>
</dbReference>
<feature type="chain" id="PRO_0000453920" description="DNA-directed RNA polymerase subunit Rpo5">
    <location>
        <begin position="1"/>
        <end position="84"/>
    </location>
</feature>
<feature type="strand" evidence="12">
    <location>
        <begin position="12"/>
        <end position="16"/>
    </location>
</feature>
<feature type="strand" evidence="12">
    <location>
        <begin position="19"/>
        <end position="22"/>
    </location>
</feature>
<feature type="helix" evidence="12">
    <location>
        <begin position="25"/>
        <end position="35"/>
    </location>
</feature>
<feature type="helix" evidence="12">
    <location>
        <begin position="39"/>
        <end position="41"/>
    </location>
</feature>
<feature type="strand" evidence="12">
    <location>
        <begin position="45"/>
        <end position="49"/>
    </location>
</feature>
<feature type="helix" evidence="12">
    <location>
        <begin position="50"/>
        <end position="55"/>
    </location>
</feature>
<feature type="strand" evidence="12">
    <location>
        <begin position="62"/>
        <end position="69"/>
    </location>
</feature>
<feature type="turn" evidence="12">
    <location>
        <begin position="70"/>
        <end position="72"/>
    </location>
</feature>
<feature type="strand" evidence="12">
    <location>
        <begin position="73"/>
        <end position="82"/>
    </location>
</feature>
<gene>
    <name evidence="1 5" type="primary">rpo5</name>
    <name evidence="1" type="synonym">rpoH</name>
    <name evidence="6" type="ORF">J5U23_00029</name>
</gene>
<evidence type="ECO:0000255" key="1">
    <source>
        <dbReference type="HAMAP-Rule" id="MF_00025"/>
    </source>
</evidence>
<evidence type="ECO:0000269" key="2">
    <source>
    </source>
</evidence>
<evidence type="ECO:0000269" key="3">
    <source>
    </source>
</evidence>
<evidence type="ECO:0000269" key="4">
    <source>
    </source>
</evidence>
<evidence type="ECO:0000303" key="5">
    <source>
    </source>
</evidence>
<evidence type="ECO:0000312" key="6">
    <source>
        <dbReference type="EMBL" id="QXJ27175.1"/>
    </source>
</evidence>
<evidence type="ECO:0007744" key="7">
    <source>
        <dbReference type="PDB" id="2WAQ"/>
    </source>
</evidence>
<evidence type="ECO:0007744" key="8">
    <source>
        <dbReference type="PDB" id="2WB1"/>
    </source>
</evidence>
<evidence type="ECO:0007744" key="9">
    <source>
        <dbReference type="PDB" id="2Y0S"/>
    </source>
</evidence>
<evidence type="ECO:0007744" key="10">
    <source>
        <dbReference type="PDB" id="4AYB"/>
    </source>
</evidence>
<evidence type="ECO:0007744" key="11">
    <source>
        <dbReference type="PDB" id="4V8S"/>
    </source>
</evidence>
<evidence type="ECO:0007829" key="12">
    <source>
        <dbReference type="PDB" id="4AYB"/>
    </source>
</evidence>
<reference evidence="7 8" key="1">
    <citation type="journal article" date="2009" name="PLoS Biol.">
        <title>Evolution of complex RNA polymerases: the complete archaeal RNA polymerase structure.</title>
        <authorList>
            <person name="Korkhin Y."/>
            <person name="Unligil U.M."/>
            <person name="Littlefield O."/>
            <person name="Nelson P.J."/>
            <person name="Stuart D.I."/>
            <person name="Sigler P.B."/>
            <person name="Bell S.D."/>
            <person name="Abrescia N.G."/>
        </authorList>
    </citation>
    <scope>NUCLEOTIDE SEQUENCE [GENOMIC DNA]</scope>
    <scope>X-RAY CRYSTALLOGRAPHY (3.35 ANGSTROMS) OF THE RNA POLYMERASE COMPLEX</scope>
    <scope>SUBUNIT</scope>
    <scope>NOMENCLATURE</scope>
    <source>
        <strain>ATCC 51178 / DSM 5389 / JCM 8931 / NBRC 15437 / B12</strain>
    </source>
</reference>
<reference evidence="6" key="2">
    <citation type="journal article" date="2021" name="Environ. Microbiol.">
        <title>New insights into the diversity and evolution of the archaeal mobilome from three complete genomes of Saccharolobus shibatae.</title>
        <authorList>
            <person name="Medvedeva S."/>
            <person name="Brandt D."/>
            <person name="Cvirkaite-Krupovic V."/>
            <person name="Liu Y."/>
            <person name="Severinov K."/>
            <person name="Ishino S."/>
            <person name="Ishino Y."/>
            <person name="Prangishvili D."/>
            <person name="Kalinowski J."/>
            <person name="Krupovic M."/>
        </authorList>
    </citation>
    <scope>NUCLEOTIDE SEQUENCE [LARGE SCALE GENOMIC DNA]</scope>
    <source>
        <strain>ATCC 51178 / DSM 5389 / JCM 8931 / NBRC 15437 / B12</strain>
    </source>
</reference>
<reference evidence="9" key="3">
    <citation type="journal article" date="2011" name="Biochem. Soc. Trans.">
        <title>Archaeal RNA polymerase: the influence of the protruding stalk in crystal packing and preliminary biophysical analysis of the Rpo13 subunit.</title>
        <authorList>
            <person name="Wojtas M."/>
            <person name="Peralta B."/>
            <person name="Ondiviela M."/>
            <person name="Mogni M."/>
            <person name="Bell S.D."/>
            <person name="Abrescia N.G."/>
        </authorList>
    </citation>
    <scope>X-RAY CRYSTALLOGRAPHY (3.80 ANGSTROMS) OF THE RNA POLYMERASE COMPLEX</scope>
    <scope>SUBUNIT</scope>
    <source>
        <strain>ATCC 51178 / DSM 5389 / JCM 8931 / NBRC 15437 / B12</strain>
    </source>
</reference>
<reference evidence="10 11" key="4">
    <citation type="journal article" date="2012" name="Nucleic Acids Res.">
        <title>Structural and functional analyses of the interaction of archaeal RNA polymerase with DNA.</title>
        <authorList>
            <person name="Wojtas M.N."/>
            <person name="Mogni M."/>
            <person name="Millet O."/>
            <person name="Bell S.D."/>
            <person name="Abrescia N.G."/>
        </authorList>
    </citation>
    <scope>X-RAY CRYSTALLOGRAPHY (3.20 ANGSTROMS) OF THE RNA POLYMERASE COMPLEX WITH AND WITHOUT DNA</scope>
    <scope>SUBUNIT</scope>
    <scope>SUBCELLULAR LOCATION</scope>
    <source>
        <strain>ATCC 51178 / DSM 5389 / JCM 8931 / NBRC 15437 / B12</strain>
    </source>
</reference>
<organism>
    <name type="scientific">Saccharolobus shibatae (strain ATCC 51178 / DSM 5389 / JCM 8931 / NBRC 15437 / B12)</name>
    <name type="common">Sulfolobus shibatae</name>
    <dbReference type="NCBI Taxonomy" id="523848"/>
    <lineage>
        <taxon>Archaea</taxon>
        <taxon>Thermoproteota</taxon>
        <taxon>Thermoprotei</taxon>
        <taxon>Sulfolobales</taxon>
        <taxon>Sulfolobaceae</taxon>
        <taxon>Saccharolobus</taxon>
    </lineage>
</organism>
<comment type="function">
    <text evidence="1">DNA-dependent RNA polymerase (RNAP) catalyzes the transcription of DNA into RNA using the four ribonucleoside triphosphates as substrates.</text>
</comment>
<comment type="catalytic activity">
    <reaction evidence="1">
        <text>RNA(n) + a ribonucleoside 5'-triphosphate = RNA(n+1) + diphosphate</text>
        <dbReference type="Rhea" id="RHEA:21248"/>
        <dbReference type="Rhea" id="RHEA-COMP:14527"/>
        <dbReference type="Rhea" id="RHEA-COMP:17342"/>
        <dbReference type="ChEBI" id="CHEBI:33019"/>
        <dbReference type="ChEBI" id="CHEBI:61557"/>
        <dbReference type="ChEBI" id="CHEBI:140395"/>
        <dbReference type="EC" id="2.7.7.6"/>
    </reaction>
</comment>
<comment type="subunit">
    <text evidence="2 3 4">Part of the 13-subunit RNA polymerase complex. Rpo1N and Rpo5 form a cleft which docks Rpo13.</text>
</comment>
<comment type="subcellular location">
    <subcellularLocation>
        <location evidence="1 4">Cytoplasm</location>
    </subcellularLocation>
</comment>
<comment type="similarity">
    <text evidence="1">Belongs to the archaeal Rpo5/eukaryotic RPB5 RNA polymerase subunit family.</text>
</comment>